<comment type="function">
    <text evidence="1">Fluoride-specific ion channel. Important for reducing fluoride concentration in the cell, thus reducing its toxicity.</text>
</comment>
<comment type="catalytic activity">
    <reaction evidence="1">
        <text>fluoride(in) = fluoride(out)</text>
        <dbReference type="Rhea" id="RHEA:76159"/>
        <dbReference type="ChEBI" id="CHEBI:17051"/>
    </reaction>
    <physiologicalReaction direction="left-to-right" evidence="1">
        <dbReference type="Rhea" id="RHEA:76160"/>
    </physiologicalReaction>
</comment>
<comment type="activity regulation">
    <text evidence="1">Na(+) is not transported, but it plays an essential structural role and its presence is essential for fluoride channel function.</text>
</comment>
<comment type="subcellular location">
    <subcellularLocation>
        <location evidence="1">Cell inner membrane</location>
        <topology evidence="1">Multi-pass membrane protein</topology>
    </subcellularLocation>
</comment>
<comment type="similarity">
    <text evidence="1">Belongs to the fluoride channel Fluc/FEX (TC 1.A.43) family.</text>
</comment>
<keyword id="KW-0997">Cell inner membrane</keyword>
<keyword id="KW-1003">Cell membrane</keyword>
<keyword id="KW-0407">Ion channel</keyword>
<keyword id="KW-0406">Ion transport</keyword>
<keyword id="KW-0472">Membrane</keyword>
<keyword id="KW-0479">Metal-binding</keyword>
<keyword id="KW-1185">Reference proteome</keyword>
<keyword id="KW-0915">Sodium</keyword>
<keyword id="KW-0812">Transmembrane</keyword>
<keyword id="KW-1133">Transmembrane helix</keyword>
<keyword id="KW-0813">Transport</keyword>
<sequence length="123" mass="13169">MQWLAIGLGAAFGACLRGWLARFNPLHHWIPLGTLGANVLGGLLIGLALVWFERMGSGLSPNIRLFVITGFLGGLTTFSTFSAEVFTFIHHGRLLAALGLVGLHVGMTLLATALGFYCFKLVL</sequence>
<dbReference type="EMBL" id="CP000082">
    <property type="protein sequence ID" value="AAZ18088.1"/>
    <property type="molecule type" value="Genomic_DNA"/>
</dbReference>
<dbReference type="RefSeq" id="WP_011279526.1">
    <property type="nucleotide sequence ID" value="NC_007204.1"/>
</dbReference>
<dbReference type="SMR" id="Q4FV70"/>
<dbReference type="STRING" id="259536.Psyc_0215"/>
<dbReference type="KEGG" id="par:Psyc_0215"/>
<dbReference type="eggNOG" id="COG0239">
    <property type="taxonomic scope" value="Bacteria"/>
</dbReference>
<dbReference type="HOGENOM" id="CLU_114342_3_3_6"/>
<dbReference type="OrthoDB" id="9806299at2"/>
<dbReference type="Proteomes" id="UP000000546">
    <property type="component" value="Chromosome"/>
</dbReference>
<dbReference type="GO" id="GO:0005886">
    <property type="term" value="C:plasma membrane"/>
    <property type="evidence" value="ECO:0007669"/>
    <property type="project" value="UniProtKB-SubCell"/>
</dbReference>
<dbReference type="GO" id="GO:0062054">
    <property type="term" value="F:fluoride channel activity"/>
    <property type="evidence" value="ECO:0007669"/>
    <property type="project" value="UniProtKB-UniRule"/>
</dbReference>
<dbReference type="GO" id="GO:0046872">
    <property type="term" value="F:metal ion binding"/>
    <property type="evidence" value="ECO:0007669"/>
    <property type="project" value="UniProtKB-KW"/>
</dbReference>
<dbReference type="GO" id="GO:0140114">
    <property type="term" value="P:cellular detoxification of fluoride"/>
    <property type="evidence" value="ECO:0007669"/>
    <property type="project" value="UniProtKB-UniRule"/>
</dbReference>
<dbReference type="HAMAP" id="MF_00454">
    <property type="entry name" value="FluC"/>
    <property type="match status" value="1"/>
</dbReference>
<dbReference type="InterPro" id="IPR003691">
    <property type="entry name" value="FluC"/>
</dbReference>
<dbReference type="PANTHER" id="PTHR28259">
    <property type="entry name" value="FLUORIDE EXPORT PROTEIN 1-RELATED"/>
    <property type="match status" value="1"/>
</dbReference>
<dbReference type="PANTHER" id="PTHR28259:SF1">
    <property type="entry name" value="FLUORIDE EXPORT PROTEIN 1-RELATED"/>
    <property type="match status" value="1"/>
</dbReference>
<dbReference type="Pfam" id="PF02537">
    <property type="entry name" value="CRCB"/>
    <property type="match status" value="1"/>
</dbReference>
<evidence type="ECO:0000255" key="1">
    <source>
        <dbReference type="HAMAP-Rule" id="MF_00454"/>
    </source>
</evidence>
<accession>Q4FV70</accession>
<feature type="chain" id="PRO_0000252918" description="Fluoride-specific ion channel FluC">
    <location>
        <begin position="1"/>
        <end position="123"/>
    </location>
</feature>
<feature type="transmembrane region" description="Helical" evidence="1">
    <location>
        <begin position="1"/>
        <end position="21"/>
    </location>
</feature>
<feature type="transmembrane region" description="Helical" evidence="1">
    <location>
        <begin position="32"/>
        <end position="52"/>
    </location>
</feature>
<feature type="transmembrane region" description="Helical" evidence="1">
    <location>
        <begin position="66"/>
        <end position="86"/>
    </location>
</feature>
<feature type="transmembrane region" description="Helical" evidence="1">
    <location>
        <begin position="94"/>
        <end position="114"/>
    </location>
</feature>
<feature type="binding site" evidence="1">
    <location>
        <position position="73"/>
    </location>
    <ligand>
        <name>Na(+)</name>
        <dbReference type="ChEBI" id="CHEBI:29101"/>
        <note>structural</note>
    </ligand>
</feature>
<feature type="binding site" evidence="1">
    <location>
        <position position="76"/>
    </location>
    <ligand>
        <name>Na(+)</name>
        <dbReference type="ChEBI" id="CHEBI:29101"/>
        <note>structural</note>
    </ligand>
</feature>
<protein>
    <recommendedName>
        <fullName evidence="1">Fluoride-specific ion channel FluC</fullName>
    </recommendedName>
</protein>
<name>FLUC_PSYA2</name>
<organism>
    <name type="scientific">Psychrobacter arcticus (strain DSM 17307 / VKM B-2377 / 273-4)</name>
    <dbReference type="NCBI Taxonomy" id="259536"/>
    <lineage>
        <taxon>Bacteria</taxon>
        <taxon>Pseudomonadati</taxon>
        <taxon>Pseudomonadota</taxon>
        <taxon>Gammaproteobacteria</taxon>
        <taxon>Moraxellales</taxon>
        <taxon>Moraxellaceae</taxon>
        <taxon>Psychrobacter</taxon>
    </lineage>
</organism>
<gene>
    <name evidence="1" type="primary">fluC</name>
    <name evidence="1" type="synonym">crcB</name>
    <name type="ordered locus">Psyc_0215</name>
</gene>
<proteinExistence type="inferred from homology"/>
<reference key="1">
    <citation type="journal article" date="2010" name="Appl. Environ. Microbiol.">
        <title>The genome sequence of Psychrobacter arcticus 273-4, a psychroactive Siberian permafrost bacterium, reveals mechanisms for adaptation to low-temperature growth.</title>
        <authorList>
            <person name="Ayala-del-Rio H.L."/>
            <person name="Chain P.S."/>
            <person name="Grzymski J.J."/>
            <person name="Ponder M.A."/>
            <person name="Ivanova N."/>
            <person name="Bergholz P.W."/>
            <person name="Di Bartolo G."/>
            <person name="Hauser L."/>
            <person name="Land M."/>
            <person name="Bakermans C."/>
            <person name="Rodrigues D."/>
            <person name="Klappenbach J."/>
            <person name="Zarka D."/>
            <person name="Larimer F."/>
            <person name="Richardson P."/>
            <person name="Murray A."/>
            <person name="Thomashow M."/>
            <person name="Tiedje J.M."/>
        </authorList>
    </citation>
    <scope>NUCLEOTIDE SEQUENCE [LARGE SCALE GENOMIC DNA]</scope>
    <source>
        <strain>DSM 17307 / VKM B-2377 / 273-4</strain>
    </source>
</reference>